<evidence type="ECO:0000255" key="1"/>
<evidence type="ECO:0000256" key="2">
    <source>
        <dbReference type="SAM" id="MobiDB-lite"/>
    </source>
</evidence>
<evidence type="ECO:0000269" key="3">
    <source>
    </source>
</evidence>
<evidence type="ECO:0000305" key="4"/>
<gene>
    <name type="primary">clpL</name>
    <name type="ordered locus">SAOUHSC_02862</name>
</gene>
<accession>Q2FV74</accession>
<comment type="function">
    <text evidence="3">Required for the development of induced thermotolerance and intracellular multiplication within bovine mammary epithelial cells.</text>
</comment>
<comment type="developmental stage">
    <text evidence="3">Induced at the transition to stationary phase.</text>
</comment>
<comment type="induction">
    <text evidence="3">Expression is sigma B-dependent.</text>
</comment>
<comment type="similarity">
    <text evidence="4">Belongs to the ClpA/ClpB family. ClpL subfamily.</text>
</comment>
<protein>
    <recommendedName>
        <fullName>ATP-dependent Clp protease ATP-binding subunit ClpL</fullName>
    </recommendedName>
</protein>
<dbReference type="EMBL" id="CP000253">
    <property type="protein sequence ID" value="ABD31861.1"/>
    <property type="molecule type" value="Genomic_DNA"/>
</dbReference>
<dbReference type="RefSeq" id="WP_001058981.1">
    <property type="nucleotide sequence ID" value="NZ_LS483365.1"/>
</dbReference>
<dbReference type="RefSeq" id="YP_501318.1">
    <property type="nucleotide sequence ID" value="NC_007795.1"/>
</dbReference>
<dbReference type="SMR" id="Q2FV74"/>
<dbReference type="STRING" id="93061.SAOUHSC_02862"/>
<dbReference type="PaxDb" id="1280-SAXN108_2798"/>
<dbReference type="GeneID" id="3921534"/>
<dbReference type="KEGG" id="sao:SAOUHSC_02862"/>
<dbReference type="PATRIC" id="fig|93061.5.peg.2587"/>
<dbReference type="eggNOG" id="COG0542">
    <property type="taxonomic scope" value="Bacteria"/>
</dbReference>
<dbReference type="HOGENOM" id="CLU_005070_4_3_9"/>
<dbReference type="OrthoDB" id="9803641at2"/>
<dbReference type="PRO" id="PR:Q2FV74"/>
<dbReference type="Proteomes" id="UP000008816">
    <property type="component" value="Chromosome"/>
</dbReference>
<dbReference type="GO" id="GO:0005737">
    <property type="term" value="C:cytoplasm"/>
    <property type="evidence" value="ECO:0000318"/>
    <property type="project" value="GO_Central"/>
</dbReference>
<dbReference type="GO" id="GO:0005524">
    <property type="term" value="F:ATP binding"/>
    <property type="evidence" value="ECO:0007669"/>
    <property type="project" value="UniProtKB-KW"/>
</dbReference>
<dbReference type="GO" id="GO:0016887">
    <property type="term" value="F:ATP hydrolysis activity"/>
    <property type="evidence" value="ECO:0000318"/>
    <property type="project" value="GO_Central"/>
</dbReference>
<dbReference type="GO" id="GO:0034605">
    <property type="term" value="P:cellular response to heat"/>
    <property type="evidence" value="ECO:0000318"/>
    <property type="project" value="GO_Central"/>
</dbReference>
<dbReference type="CDD" id="cd00009">
    <property type="entry name" value="AAA"/>
    <property type="match status" value="1"/>
</dbReference>
<dbReference type="CDD" id="cd19499">
    <property type="entry name" value="RecA-like_ClpB_Hsp104-like"/>
    <property type="match status" value="1"/>
</dbReference>
<dbReference type="FunFam" id="3.40.50.300:FF:000025">
    <property type="entry name" value="ATP-dependent Clp protease subunit"/>
    <property type="match status" value="1"/>
</dbReference>
<dbReference type="Gene3D" id="1.10.8.60">
    <property type="match status" value="2"/>
</dbReference>
<dbReference type="Gene3D" id="3.40.50.300">
    <property type="entry name" value="P-loop containing nucleotide triphosphate hydrolases"/>
    <property type="match status" value="2"/>
</dbReference>
<dbReference type="Gene3D" id="4.10.860.10">
    <property type="entry name" value="UVR domain"/>
    <property type="match status" value="1"/>
</dbReference>
<dbReference type="InterPro" id="IPR003593">
    <property type="entry name" value="AAA+_ATPase"/>
</dbReference>
<dbReference type="InterPro" id="IPR003959">
    <property type="entry name" value="ATPase_AAA_core"/>
</dbReference>
<dbReference type="InterPro" id="IPR019489">
    <property type="entry name" value="Clp_ATPase_C"/>
</dbReference>
<dbReference type="InterPro" id="IPR001270">
    <property type="entry name" value="ClpA/B"/>
</dbReference>
<dbReference type="InterPro" id="IPR041546">
    <property type="entry name" value="ClpA/ClpB_AAA_lid"/>
</dbReference>
<dbReference type="InterPro" id="IPR050130">
    <property type="entry name" value="ClpA_ClpB"/>
</dbReference>
<dbReference type="InterPro" id="IPR027417">
    <property type="entry name" value="P-loop_NTPase"/>
</dbReference>
<dbReference type="PANTHER" id="PTHR11638">
    <property type="entry name" value="ATP-DEPENDENT CLP PROTEASE"/>
    <property type="match status" value="1"/>
</dbReference>
<dbReference type="PANTHER" id="PTHR11638:SF188">
    <property type="entry name" value="ATP-DEPENDENT CLP PROTEASE ATP-BINDING SUBUNIT CLPL"/>
    <property type="match status" value="1"/>
</dbReference>
<dbReference type="Pfam" id="PF00004">
    <property type="entry name" value="AAA"/>
    <property type="match status" value="1"/>
</dbReference>
<dbReference type="Pfam" id="PF07724">
    <property type="entry name" value="AAA_2"/>
    <property type="match status" value="1"/>
</dbReference>
<dbReference type="Pfam" id="PF17871">
    <property type="entry name" value="AAA_lid_9"/>
    <property type="match status" value="1"/>
</dbReference>
<dbReference type="Pfam" id="PF10431">
    <property type="entry name" value="ClpB_D2-small"/>
    <property type="match status" value="1"/>
</dbReference>
<dbReference type="PRINTS" id="PR00300">
    <property type="entry name" value="CLPPROTEASEA"/>
</dbReference>
<dbReference type="SMART" id="SM00382">
    <property type="entry name" value="AAA"/>
    <property type="match status" value="2"/>
</dbReference>
<dbReference type="SMART" id="SM01086">
    <property type="entry name" value="ClpB_D2-small"/>
    <property type="match status" value="1"/>
</dbReference>
<dbReference type="SUPFAM" id="SSF52540">
    <property type="entry name" value="P-loop containing nucleoside triphosphate hydrolases"/>
    <property type="match status" value="2"/>
</dbReference>
<keyword id="KW-0067">ATP-binding</keyword>
<keyword id="KW-0143">Chaperone</keyword>
<keyword id="KW-0547">Nucleotide-binding</keyword>
<keyword id="KW-1185">Reference proteome</keyword>
<keyword id="KW-0843">Virulence</keyword>
<sequence length="701" mass="77836">MNNGFFNSDFDSIFRRMMKDMQGSNQVGNKKYYINGKEVSPEELAQLTQQGGNHSAEQSAQAFQQAAQRQQGQQGGNGNYLEQIGRNLTQEARDGLLDPVIGRDKEIQETAEVLSRRTKNNPILVGEAGVGKTAIVEGLAQAIVEGNVPAAIKDKEIISVDISSLEAGTQYRGAFEENIQKLIEGVKSSQNAVLFFDEIHQIIGSGATGSDSGSKGLSDILKPALSRGEISIIGATTQDEYRNNILKDAALTRRFNEVLVNEPSAKDTVEILKGIREKFEEHHQVKLPDDVLKACVDLSIQYIPQRLLPDKAIDVLDITAAHLSAQSPAVDKVETEKRISELENDKRKAVSAEEYKKADDIQNEIKSLQDKLENSNGEHTAVATVHDISDTIQRLTGIPVSQMDDNDIERLKNISNRLRSKIIGQDQAVEMVSRAIRRNRAGFDDGNRPIGSFLFVGPTGVGKTELAKQLAIDLFGNKDALIRLDMSEYSDTTAVSKMIGTTAGYVGYDDNSNTLTEKVRRNPYSVILFDEIEKANPQILTLLLQVMDDGNLTDGQGNVINFKNTIIICTSNAGFGNGNDAEEKDIMHEMKKFFRPEFLNRFNGIVEFLHLDKDALQDIVNLLLDDVQVTLDKKGITMDVSQDAKDWLIEEGYDEELGARPLRRIVEQQVRDKITDYYLDHTDVKHVDIDVEDNELVVKGK</sequence>
<name>CLPL_STAA8</name>
<proteinExistence type="evidence at transcript level"/>
<feature type="chain" id="PRO_0000269494" description="ATP-dependent Clp protease ATP-binding subunit ClpL">
    <location>
        <begin position="1"/>
        <end position="701"/>
    </location>
</feature>
<feature type="domain" description="UVR">
    <location>
        <begin position="336"/>
        <end position="371"/>
    </location>
</feature>
<feature type="region of interest" description="Disordered" evidence="2">
    <location>
        <begin position="47"/>
        <end position="79"/>
    </location>
</feature>
<feature type="region of interest" description="I">
    <location>
        <begin position="81"/>
        <end position="332"/>
    </location>
</feature>
<feature type="region of interest" description="II">
    <location>
        <begin position="383"/>
        <end position="575"/>
    </location>
</feature>
<feature type="compositionally biased region" description="Polar residues" evidence="2">
    <location>
        <begin position="47"/>
        <end position="57"/>
    </location>
</feature>
<feature type="compositionally biased region" description="Low complexity" evidence="2">
    <location>
        <begin position="58"/>
        <end position="72"/>
    </location>
</feature>
<feature type="binding site" evidence="1">
    <location>
        <begin position="126"/>
        <end position="133"/>
    </location>
    <ligand>
        <name>ATP</name>
        <dbReference type="ChEBI" id="CHEBI:30616"/>
    </ligand>
</feature>
<feature type="binding site" evidence="1">
    <location>
        <begin position="457"/>
        <end position="464"/>
    </location>
    <ligand>
        <name>ATP</name>
        <dbReference type="ChEBI" id="CHEBI:30616"/>
    </ligand>
</feature>
<reference key="1">
    <citation type="book" date="2006" name="Gram positive pathogens, 2nd edition">
        <title>The Staphylococcus aureus NCTC 8325 genome.</title>
        <editorList>
            <person name="Fischetti V."/>
            <person name="Novick R."/>
            <person name="Ferretti J."/>
            <person name="Portnoy D."/>
            <person name="Rood J."/>
        </editorList>
        <authorList>
            <person name="Gillaspy A.F."/>
            <person name="Worrell V."/>
            <person name="Orvis J."/>
            <person name="Roe B.A."/>
            <person name="Dyer D.W."/>
            <person name="Iandolo J.J."/>
        </authorList>
    </citation>
    <scope>NUCLEOTIDE SEQUENCE [LARGE SCALE GENOMIC DNA]</scope>
    <source>
        <strain>NCTC 8325 / PS 47</strain>
    </source>
</reference>
<reference key="2">
    <citation type="journal article" date="2004" name="Mol. Microbiol.">
        <title>Clp ATPases are required for stress tolerance, intracellular replication and biofilm formation in Staphylococcus aureus.</title>
        <authorList>
            <person name="Frees D."/>
            <person name="Chastanet A."/>
            <person name="Qazi S."/>
            <person name="Soerensen K."/>
            <person name="Hill P."/>
            <person name="Msadek T."/>
            <person name="Ingmer H."/>
        </authorList>
    </citation>
    <scope>FUNCTION</scope>
    <scope>DEVELOPMENTAL STAGE</scope>
    <scope>INDUCTION</scope>
</reference>
<organism>
    <name type="scientific">Staphylococcus aureus (strain NCTC 8325 / PS 47)</name>
    <dbReference type="NCBI Taxonomy" id="93061"/>
    <lineage>
        <taxon>Bacteria</taxon>
        <taxon>Bacillati</taxon>
        <taxon>Bacillota</taxon>
        <taxon>Bacilli</taxon>
        <taxon>Bacillales</taxon>
        <taxon>Staphylococcaceae</taxon>
        <taxon>Staphylococcus</taxon>
    </lineage>
</organism>